<keyword id="KW-0106">Calcium</keyword>
<keyword id="KW-0456">Lyase</keyword>
<keyword id="KW-0479">Metal-binding</keyword>
<keyword id="KW-0964">Secreted</keyword>
<keyword id="KW-0732">Signal</keyword>
<feature type="signal peptide" evidence="2">
    <location>
        <begin position="1"/>
        <end position="29"/>
    </location>
</feature>
<feature type="chain" id="PRO_0000024862" description="Pectate lyase">
    <location>
        <begin position="30"/>
        <end position="379"/>
    </location>
</feature>
<feature type="region of interest" description="Disordered" evidence="3">
    <location>
        <begin position="190"/>
        <end position="209"/>
    </location>
</feature>
<feature type="active site" evidence="2">
    <location>
        <position position="264"/>
    </location>
</feature>
<feature type="binding site" evidence="1">
    <location>
        <position position="169"/>
    </location>
    <ligand>
        <name>Ca(2+)</name>
        <dbReference type="ChEBI" id="CHEBI:29108"/>
    </ligand>
</feature>
<feature type="binding site" evidence="1">
    <location>
        <position position="208"/>
    </location>
    <ligand>
        <name>Ca(2+)</name>
        <dbReference type="ChEBI" id="CHEBI:29108"/>
    </ligand>
</feature>
<feature type="binding site" evidence="1">
    <location>
        <position position="212"/>
    </location>
    <ligand>
        <name>Ca(2+)</name>
        <dbReference type="ChEBI" id="CHEBI:29108"/>
    </ligand>
</feature>
<gene>
    <name type="primary">pelP</name>
</gene>
<organism>
    <name type="scientific">Pseudomonas amygdali pv. lachrymans</name>
    <name type="common">Pseudomonas syringae pv. lachrymans</name>
    <dbReference type="NCBI Taxonomy" id="53707"/>
    <lineage>
        <taxon>Bacteria</taxon>
        <taxon>Pseudomonadati</taxon>
        <taxon>Pseudomonadota</taxon>
        <taxon>Gammaproteobacteria</taxon>
        <taxon>Pseudomonadales</taxon>
        <taxon>Pseudomonadaceae</taxon>
        <taxon>Pseudomonas</taxon>
        <taxon>Pseudomonas amygdali</taxon>
    </lineage>
</organism>
<reference key="1">
    <citation type="submission" date="1996-10" db="EMBL/GenBank/DDBJ databases">
        <authorList>
            <person name="Bauer D.W."/>
            <person name="Collmer A."/>
        </authorList>
    </citation>
    <scope>NUCLEOTIDE SEQUENCE [GENOMIC DNA]</scope>
    <source>
        <strain>859</strain>
    </source>
</reference>
<comment type="function">
    <text>Plays a role in bacterial invasion of plants.</text>
</comment>
<comment type="catalytic activity">
    <reaction>
        <text>Eliminative cleavage of (1-&gt;4)-alpha-D-galacturonan to give oligosaccharides with 4-deoxy-alpha-D-galact-4-enuronosyl groups at their non-reducing ends.</text>
        <dbReference type="EC" id="4.2.2.2"/>
    </reaction>
</comment>
<comment type="cofactor">
    <cofactor evidence="1">
        <name>Ca(2+)</name>
        <dbReference type="ChEBI" id="CHEBI:29108"/>
    </cofactor>
    <text evidence="1">Binds 1 Ca(2+) ion per subunit.</text>
</comment>
<comment type="pathway">
    <text>Glycan metabolism; pectin degradation; 2-dehydro-3-deoxy-D-gluconate from pectin: step 2/5.</text>
</comment>
<comment type="subcellular location">
    <subcellularLocation>
        <location>Secreted</location>
    </subcellularLocation>
</comment>
<comment type="similarity">
    <text evidence="4">Belongs to the polysaccharide lyase 1 family.</text>
</comment>
<dbReference type="EC" id="4.2.2.2"/>
<dbReference type="EMBL" id="U75414">
    <property type="protein sequence ID" value="AAB17879.1"/>
    <property type="molecule type" value="Genomic_DNA"/>
</dbReference>
<dbReference type="SMR" id="P72242"/>
<dbReference type="CAZy" id="PL1">
    <property type="family name" value="Polysaccharide Lyase Family 1"/>
</dbReference>
<dbReference type="UniPathway" id="UPA00545">
    <property type="reaction ID" value="UER00824"/>
</dbReference>
<dbReference type="GO" id="GO:0005576">
    <property type="term" value="C:extracellular region"/>
    <property type="evidence" value="ECO:0007669"/>
    <property type="project" value="UniProtKB-SubCell"/>
</dbReference>
<dbReference type="GO" id="GO:0046872">
    <property type="term" value="F:metal ion binding"/>
    <property type="evidence" value="ECO:0007669"/>
    <property type="project" value="UniProtKB-KW"/>
</dbReference>
<dbReference type="GO" id="GO:0030570">
    <property type="term" value="F:pectate lyase activity"/>
    <property type="evidence" value="ECO:0007669"/>
    <property type="project" value="UniProtKB-EC"/>
</dbReference>
<dbReference type="GO" id="GO:0045490">
    <property type="term" value="P:pectin catabolic process"/>
    <property type="evidence" value="ECO:0007669"/>
    <property type="project" value="UniProtKB-UniPathway"/>
</dbReference>
<dbReference type="Gene3D" id="2.160.20.10">
    <property type="entry name" value="Single-stranded right-handed beta-helix, Pectin lyase-like"/>
    <property type="match status" value="1"/>
</dbReference>
<dbReference type="InterPro" id="IPR002022">
    <property type="entry name" value="Pec_lyase"/>
</dbReference>
<dbReference type="InterPro" id="IPR012334">
    <property type="entry name" value="Pectin_lyas_fold"/>
</dbReference>
<dbReference type="InterPro" id="IPR011050">
    <property type="entry name" value="Pectin_lyase_fold/virulence"/>
</dbReference>
<dbReference type="InterPro" id="IPR045032">
    <property type="entry name" value="PEL"/>
</dbReference>
<dbReference type="PANTHER" id="PTHR31683">
    <property type="entry name" value="PECTATE LYASE 18-RELATED"/>
    <property type="match status" value="1"/>
</dbReference>
<dbReference type="PANTHER" id="PTHR31683:SF18">
    <property type="entry name" value="PECTATE LYASE 21-RELATED"/>
    <property type="match status" value="1"/>
</dbReference>
<dbReference type="Pfam" id="PF00544">
    <property type="entry name" value="Pectate_lyase_4"/>
    <property type="match status" value="1"/>
</dbReference>
<dbReference type="SMART" id="SM00656">
    <property type="entry name" value="Amb_all"/>
    <property type="match status" value="1"/>
</dbReference>
<dbReference type="SUPFAM" id="SSF51126">
    <property type="entry name" value="Pectin lyase-like"/>
    <property type="match status" value="1"/>
</dbReference>
<proteinExistence type="inferred from homology"/>
<evidence type="ECO:0000250" key="1"/>
<evidence type="ECO:0000255" key="2"/>
<evidence type="ECO:0000256" key="3">
    <source>
        <dbReference type="SAM" id="MobiDB-lite"/>
    </source>
</evidence>
<evidence type="ECO:0000305" key="4"/>
<accession>P72242</accession>
<sequence>MLKPHGLTPLALTGGILVSLLSVSLSAHAEIATDVATTGWATQNGGTKGGSRAAANNIYTVKNAAELKAALAASGGSNGRIIKERGVIDVSDGKPYTKTSDMKQRARLDIPGKTTIVGTSSSAEIREGFFYAKENDVIIRNLTIENPWDPEPVWDPEDGSAGNWNSEYDGLTVEGASNVWIDHVTFTDGRRTDDQNGTANGRPKQHHDGALDVKNGANYVTISYSVFRNHEKNNLIGSSDSKTPDDGKLKVTNHNSLFENISSRGPRVRVGQVHLYNNHHIGSTTHKVYPCVYAQGVGKGSKIFSERNVLDISGISGCSKVAADYGGSVYRDSGSLVNGSVISCSWSTSIGWTPPYSYTPLAADKVAADVKAKAGAGKI</sequence>
<protein>
    <recommendedName>
        <fullName>Pectate lyase</fullName>
        <shortName>PL</shortName>
        <ecNumber>4.2.2.2</ecNumber>
    </recommendedName>
</protein>
<name>PLY_PSEAV</name>